<proteinExistence type="evidence at protein level"/>
<organism>
    <name type="scientific">Patiria pectinifera</name>
    <name type="common">Starfish</name>
    <name type="synonym">Asterina pectinifera</name>
    <dbReference type="NCBI Taxonomy" id="7594"/>
    <lineage>
        <taxon>Eukaryota</taxon>
        <taxon>Metazoa</taxon>
        <taxon>Echinodermata</taxon>
        <taxon>Eleutherozoa</taxon>
        <taxon>Asterozoa</taxon>
        <taxon>Asteroidea</taxon>
        <taxon>Valvatacea</taxon>
        <taxon>Valvatida</taxon>
        <taxon>Asterinidae</taxon>
        <taxon>Patiria</taxon>
    </lineage>
</organism>
<protein>
    <recommendedName>
        <fullName evidence="3">Alpha-N-acetylgalactosamine-specific lectin</fullName>
    </recommendedName>
    <alternativeName>
        <fullName evidence="6">Alpha-N-acetylgalactosamine-binding lectin</fullName>
    </alternativeName>
    <alternativeName>
        <fullName evidence="5">GalNAc-specific lectin</fullName>
    </alternativeName>
    <alternativeName>
        <fullName evidence="3">Lectin</fullName>
        <shortName evidence="3">ApL</shortName>
    </alternativeName>
    <alternativeName>
        <fullName evidence="6">Tn antigen-specific lectin</fullName>
    </alternativeName>
</protein>
<name>LECG_PATPE</name>
<accession>Q8WPD0</accession>
<sequence length="168" mass="18936">MAFFRALCFVLLVGFAAACQPDCSWKCPPKCPPMWTFYNGNCYRYFGTGKTYDEAESHCQEFTEVGLGHLASIASAEENNLLLTMWKSVRTTTTGGLWIGLNDQAEEGNFIWTDGSAVTFTDWATTQPDNYQNEDCAHMRHELDGDDRWNDIACSRAFAYVCKMSTTN</sequence>
<keyword id="KW-0903">Direct protein sequencing</keyword>
<keyword id="KW-1015">Disulfide bond</keyword>
<keyword id="KW-0348">Hemagglutinin</keyword>
<keyword id="KW-0430">Lectin</keyword>
<keyword id="KW-0732">Signal</keyword>
<dbReference type="EMBL" id="AB062765">
    <property type="protein sequence ID" value="BAB78598.1"/>
    <property type="molecule type" value="mRNA"/>
</dbReference>
<dbReference type="EMBL" id="AB079848">
    <property type="protein sequence ID" value="BAB85109.1"/>
    <property type="molecule type" value="mRNA"/>
</dbReference>
<dbReference type="SMR" id="Q8WPD0"/>
<dbReference type="GO" id="GO:0030246">
    <property type="term" value="F:carbohydrate binding"/>
    <property type="evidence" value="ECO:0007669"/>
    <property type="project" value="UniProtKB-KW"/>
</dbReference>
<dbReference type="CDD" id="cd03589">
    <property type="entry name" value="CLECT_CEL-1_like"/>
    <property type="match status" value="1"/>
</dbReference>
<dbReference type="Gene3D" id="3.10.100.10">
    <property type="entry name" value="Mannose-Binding Protein A, subunit A"/>
    <property type="match status" value="1"/>
</dbReference>
<dbReference type="InterPro" id="IPR001304">
    <property type="entry name" value="C-type_lectin-like"/>
</dbReference>
<dbReference type="InterPro" id="IPR016186">
    <property type="entry name" value="C-type_lectin-like/link_sf"/>
</dbReference>
<dbReference type="InterPro" id="IPR050111">
    <property type="entry name" value="C-type_lectin/snaclec_domain"/>
</dbReference>
<dbReference type="InterPro" id="IPR018378">
    <property type="entry name" value="C-type_lectin_CS"/>
</dbReference>
<dbReference type="InterPro" id="IPR033988">
    <property type="entry name" value="CEL1-like_CTLD"/>
</dbReference>
<dbReference type="InterPro" id="IPR016187">
    <property type="entry name" value="CTDL_fold"/>
</dbReference>
<dbReference type="PANTHER" id="PTHR22803">
    <property type="entry name" value="MANNOSE, PHOSPHOLIPASE, LECTIN RECEPTOR RELATED"/>
    <property type="match status" value="1"/>
</dbReference>
<dbReference type="Pfam" id="PF00059">
    <property type="entry name" value="Lectin_C"/>
    <property type="match status" value="1"/>
</dbReference>
<dbReference type="SMART" id="SM00034">
    <property type="entry name" value="CLECT"/>
    <property type="match status" value="1"/>
</dbReference>
<dbReference type="SUPFAM" id="SSF56436">
    <property type="entry name" value="C-type lectin-like"/>
    <property type="match status" value="1"/>
</dbReference>
<dbReference type="PROSITE" id="PS00615">
    <property type="entry name" value="C_TYPE_LECTIN_1"/>
    <property type="match status" value="1"/>
</dbReference>
<dbReference type="PROSITE" id="PS50041">
    <property type="entry name" value="C_TYPE_LECTIN_2"/>
    <property type="match status" value="1"/>
</dbReference>
<reference evidence="4 5" key="1">
    <citation type="journal article" date="2002" name="Glycobiology">
        <title>Purification, characterization, and cDNA cloning of alpha-N-acetylgalactosamine-specific lectin from starfish, Asterina pectinifera.</title>
        <authorList>
            <person name="Kakiuchi M."/>
            <person name="Okino N."/>
            <person name="Sueyoshi N."/>
            <person name="Ichinose S."/>
            <person name="Omori A."/>
            <person name="Kawabata S."/>
            <person name="Yamaguchi K."/>
            <person name="Ito M."/>
        </authorList>
    </citation>
    <scope>NUCLEOTIDE SEQUENCE [MRNA]</scope>
    <scope>PROTEIN SEQUENCE OF 19-26; 51-74; 88-107 AND 157-163</scope>
    <scope>FUNCTION</scope>
    <scope>SUBUNIT</scope>
    <scope>VARIANTS VAL-4; SER-15; GLN-67; ALA-84 AND VAL-153</scope>
</reference>
<comment type="function">
    <text evidence="2">Alpha-N-acetylgalactosamine-specific lectin. The oligomeric form has Ca(2+)-dependent hemagglutination activity towards sheep erythrocytes. Its hemagglutination activity is inhibited by various monosaccharides, oligosaccharides and glycopeptides, including inhibition by GalNAc, blood group A trisaccharide, Tn antigen, mucin and asialomucin.</text>
</comment>
<comment type="subunit">
    <text evidence="2">Monomer, homodimer and homooligomer.</text>
</comment>
<feature type="signal peptide" evidence="2">
    <location>
        <begin position="1"/>
        <end position="18"/>
    </location>
</feature>
<feature type="chain" id="PRO_5000049722" description="Alpha-N-acetylgalactosamine-specific lectin" evidence="2">
    <location>
        <begin position="19"/>
        <end position="168"/>
    </location>
</feature>
<feature type="domain" description="C-type lectin" evidence="1">
    <location>
        <begin position="38"/>
        <end position="163"/>
    </location>
</feature>
<feature type="disulfide bond" evidence="1">
    <location>
        <begin position="59"/>
        <end position="162"/>
    </location>
</feature>
<feature type="disulfide bond" evidence="1">
    <location>
        <begin position="136"/>
        <end position="154"/>
    </location>
</feature>
<feature type="sequence variant" evidence="2">
    <original>F</original>
    <variation>V</variation>
    <location>
        <position position="4"/>
    </location>
</feature>
<feature type="sequence variant" evidence="2">
    <original>F</original>
    <variation>S</variation>
    <location>
        <position position="15"/>
    </location>
</feature>
<feature type="sequence variant" evidence="2">
    <original>L</original>
    <variation>Q</variation>
    <location>
        <position position="67"/>
    </location>
</feature>
<feature type="sequence variant" evidence="2">
    <original>T</original>
    <variation>A</variation>
    <location>
        <position position="84"/>
    </location>
</feature>
<feature type="sequence variant" evidence="2">
    <original>A</original>
    <variation>V</variation>
    <location>
        <position position="153"/>
    </location>
</feature>
<evidence type="ECO:0000255" key="1">
    <source>
        <dbReference type="PROSITE-ProRule" id="PRU00040"/>
    </source>
</evidence>
<evidence type="ECO:0000269" key="2">
    <source>
    </source>
</evidence>
<evidence type="ECO:0000303" key="3">
    <source>
    </source>
</evidence>
<evidence type="ECO:0000305" key="4"/>
<evidence type="ECO:0000312" key="5">
    <source>
        <dbReference type="EMBL" id="BAB78598.1"/>
    </source>
</evidence>
<evidence type="ECO:0000312" key="6">
    <source>
        <dbReference type="EMBL" id="BAB85109.1"/>
    </source>
</evidence>